<dbReference type="EMBL" id="CU329671">
    <property type="protein sequence ID" value="CBA11510.1"/>
    <property type="molecule type" value="Genomic_DNA"/>
</dbReference>
<dbReference type="RefSeq" id="XP_002788942.1">
    <property type="nucleotide sequence ID" value="XM_002788896.2"/>
</dbReference>
<dbReference type="SMR" id="C6Y4C1"/>
<dbReference type="BioGRID" id="1028330">
    <property type="interactions" value="1"/>
</dbReference>
<dbReference type="FunCoup" id="C6Y4C1">
    <property type="interactions" value="195"/>
</dbReference>
<dbReference type="STRING" id="284812.C6Y4C1"/>
<dbReference type="iPTMnet" id="C6Y4C1"/>
<dbReference type="PaxDb" id="4896-SPBC1604.25.1"/>
<dbReference type="EnsemblFungi" id="SPBC1604.25.1">
    <property type="protein sequence ID" value="SPBC1604.25.1:pep"/>
    <property type="gene ID" value="SPBC1604.25"/>
</dbReference>
<dbReference type="PomBase" id="SPBC1604.25">
    <property type="gene designation" value="pet117"/>
</dbReference>
<dbReference type="VEuPathDB" id="FungiDB:SPBC1604.25"/>
<dbReference type="HOGENOM" id="CLU_161486_3_1_1"/>
<dbReference type="InParanoid" id="C6Y4C1"/>
<dbReference type="OMA" id="FYEKDQP"/>
<dbReference type="PRO" id="PR:C6Y4C1"/>
<dbReference type="Proteomes" id="UP000002485">
    <property type="component" value="Chromosome II"/>
</dbReference>
<dbReference type="GO" id="GO:0099616">
    <property type="term" value="C:extrinsic component of matrix side of mitochondrial inner membrane"/>
    <property type="evidence" value="ECO:0000266"/>
    <property type="project" value="PomBase"/>
</dbReference>
<dbReference type="GO" id="GO:0005739">
    <property type="term" value="C:mitochondrion"/>
    <property type="evidence" value="ECO:0000318"/>
    <property type="project" value="GO_Central"/>
</dbReference>
<dbReference type="GO" id="GO:0033617">
    <property type="term" value="P:mitochondrial cytochrome c oxidase assembly"/>
    <property type="evidence" value="ECO:0000318"/>
    <property type="project" value="GO_Central"/>
</dbReference>
<dbReference type="InterPro" id="IPR031568">
    <property type="entry name" value="Pet117"/>
</dbReference>
<dbReference type="PANTHER" id="PTHR28163">
    <property type="entry name" value="PROTEIN PET117 HOMOLOG, MITOCHONDRIAL"/>
    <property type="match status" value="1"/>
</dbReference>
<dbReference type="PANTHER" id="PTHR28163:SF1">
    <property type="entry name" value="PROTEIN PET117 HOMOLOG, MITOCHONDRIAL"/>
    <property type="match status" value="1"/>
</dbReference>
<dbReference type="Pfam" id="PF15786">
    <property type="entry name" value="PET117"/>
    <property type="match status" value="1"/>
</dbReference>
<protein>
    <recommendedName>
        <fullName>Protein pet117, mitochondrial</fullName>
    </recommendedName>
</protein>
<organism>
    <name type="scientific">Schizosaccharomyces pombe (strain 972 / ATCC 24843)</name>
    <name type="common">Fission yeast</name>
    <dbReference type="NCBI Taxonomy" id="284812"/>
    <lineage>
        <taxon>Eukaryota</taxon>
        <taxon>Fungi</taxon>
        <taxon>Dikarya</taxon>
        <taxon>Ascomycota</taxon>
        <taxon>Taphrinomycotina</taxon>
        <taxon>Schizosaccharomycetes</taxon>
        <taxon>Schizosaccharomycetales</taxon>
        <taxon>Schizosaccharomycetaceae</taxon>
        <taxon>Schizosaccharomyces</taxon>
    </lineage>
</organism>
<feature type="transit peptide" description="Mitochondrion" evidence="2">
    <location>
        <begin position="1"/>
        <end status="unknown"/>
    </location>
</feature>
<feature type="chain" id="PRO_0000389139" description="Protein pet117, mitochondrial">
    <location>
        <begin status="unknown"/>
        <end position="88"/>
    </location>
</feature>
<proteinExistence type="evidence at transcript level"/>
<reference key="1">
    <citation type="journal article" date="2002" name="Nature">
        <title>The genome sequence of Schizosaccharomyces pombe.</title>
        <authorList>
            <person name="Wood V."/>
            <person name="Gwilliam R."/>
            <person name="Rajandream M.A."/>
            <person name="Lyne M.H."/>
            <person name="Lyne R."/>
            <person name="Stewart A."/>
            <person name="Sgouros J.G."/>
            <person name="Peat N."/>
            <person name="Hayles J."/>
            <person name="Baker S.G."/>
            <person name="Basham D."/>
            <person name="Bowman S."/>
            <person name="Brooks K."/>
            <person name="Brown D."/>
            <person name="Brown S."/>
            <person name="Chillingworth T."/>
            <person name="Churcher C.M."/>
            <person name="Collins M."/>
            <person name="Connor R."/>
            <person name="Cronin A."/>
            <person name="Davis P."/>
            <person name="Feltwell T."/>
            <person name="Fraser A."/>
            <person name="Gentles S."/>
            <person name="Goble A."/>
            <person name="Hamlin N."/>
            <person name="Harris D.E."/>
            <person name="Hidalgo J."/>
            <person name="Hodgson G."/>
            <person name="Holroyd S."/>
            <person name="Hornsby T."/>
            <person name="Howarth S."/>
            <person name="Huckle E.J."/>
            <person name="Hunt S."/>
            <person name="Jagels K."/>
            <person name="James K.D."/>
            <person name="Jones L."/>
            <person name="Jones M."/>
            <person name="Leather S."/>
            <person name="McDonald S."/>
            <person name="McLean J."/>
            <person name="Mooney P."/>
            <person name="Moule S."/>
            <person name="Mungall K.L."/>
            <person name="Murphy L.D."/>
            <person name="Niblett D."/>
            <person name="Odell C."/>
            <person name="Oliver K."/>
            <person name="O'Neil S."/>
            <person name="Pearson D."/>
            <person name="Quail M.A."/>
            <person name="Rabbinowitsch E."/>
            <person name="Rutherford K.M."/>
            <person name="Rutter S."/>
            <person name="Saunders D."/>
            <person name="Seeger K."/>
            <person name="Sharp S."/>
            <person name="Skelton J."/>
            <person name="Simmonds M.N."/>
            <person name="Squares R."/>
            <person name="Squares S."/>
            <person name="Stevens K."/>
            <person name="Taylor K."/>
            <person name="Taylor R.G."/>
            <person name="Tivey A."/>
            <person name="Walsh S.V."/>
            <person name="Warren T."/>
            <person name="Whitehead S."/>
            <person name="Woodward J.R."/>
            <person name="Volckaert G."/>
            <person name="Aert R."/>
            <person name="Robben J."/>
            <person name="Grymonprez B."/>
            <person name="Weltjens I."/>
            <person name="Vanstreels E."/>
            <person name="Rieger M."/>
            <person name="Schaefer M."/>
            <person name="Mueller-Auer S."/>
            <person name="Gabel C."/>
            <person name="Fuchs M."/>
            <person name="Duesterhoeft A."/>
            <person name="Fritzc C."/>
            <person name="Holzer E."/>
            <person name="Moestl D."/>
            <person name="Hilbert H."/>
            <person name="Borzym K."/>
            <person name="Langer I."/>
            <person name="Beck A."/>
            <person name="Lehrach H."/>
            <person name="Reinhardt R."/>
            <person name="Pohl T.M."/>
            <person name="Eger P."/>
            <person name="Zimmermann W."/>
            <person name="Wedler H."/>
            <person name="Wambutt R."/>
            <person name="Purnelle B."/>
            <person name="Goffeau A."/>
            <person name="Cadieu E."/>
            <person name="Dreano S."/>
            <person name="Gloux S."/>
            <person name="Lelaure V."/>
            <person name="Mottier S."/>
            <person name="Galibert F."/>
            <person name="Aves S.J."/>
            <person name="Xiang Z."/>
            <person name="Hunt C."/>
            <person name="Moore K."/>
            <person name="Hurst S.M."/>
            <person name="Lucas M."/>
            <person name="Rochet M."/>
            <person name="Gaillardin C."/>
            <person name="Tallada V.A."/>
            <person name="Garzon A."/>
            <person name="Thode G."/>
            <person name="Daga R.R."/>
            <person name="Cruzado L."/>
            <person name="Jimenez J."/>
            <person name="Sanchez M."/>
            <person name="del Rey F."/>
            <person name="Benito J."/>
            <person name="Dominguez A."/>
            <person name="Revuelta J.L."/>
            <person name="Moreno S."/>
            <person name="Armstrong J."/>
            <person name="Forsburg S.L."/>
            <person name="Cerutti L."/>
            <person name="Lowe T."/>
            <person name="McCombie W.R."/>
            <person name="Paulsen I."/>
            <person name="Potashkin J."/>
            <person name="Shpakovski G.V."/>
            <person name="Ussery D."/>
            <person name="Barrell B.G."/>
            <person name="Nurse P."/>
        </authorList>
    </citation>
    <scope>NUCLEOTIDE SEQUENCE [LARGE SCALE GENOMIC DNA]</scope>
    <source>
        <strain>972 / ATCC 24843</strain>
    </source>
</reference>
<reference key="2">
    <citation type="journal article" date="2008" name="Nature">
        <title>Dynamic repertoire of a eukaryotic transcriptome surveyed at single-nucleotide resolution.</title>
        <authorList>
            <person name="Wilhelm B.T."/>
            <person name="Marguerat S."/>
            <person name="Watt S."/>
            <person name="Schubert F."/>
            <person name="Wood V."/>
            <person name="Goodhead I."/>
            <person name="Penkett C.J."/>
            <person name="Rogers J."/>
            <person name="Baehler J."/>
        </authorList>
    </citation>
    <scope>IDENTIFICATION</scope>
</reference>
<comment type="function">
    <text evidence="1">Involved in the assembly of cytochrome c oxidase.</text>
</comment>
<comment type="subcellular location">
    <subcellularLocation>
        <location evidence="1">Mitochondrion</location>
    </subcellularLocation>
</comment>
<comment type="similarity">
    <text evidence="3">Belongs to the PET117 family.</text>
</comment>
<evidence type="ECO:0000250" key="1"/>
<evidence type="ECO:0000255" key="2"/>
<evidence type="ECO:0000305" key="3"/>
<name>PT117_SCHPO</name>
<keyword id="KW-0496">Mitochondrion</keyword>
<keyword id="KW-1185">Reference proteome</keyword>
<keyword id="KW-0809">Transit peptide</keyword>
<sequence length="88" mass="10374">MSTASKLCIVGAGVFSVYMVYFVHNNQIIEREKMSAGVQKDDERKRIKKERFEDLKRQQELRKFYESQLPVEEDEKGLRQTTQTTVND</sequence>
<gene>
    <name type="primary">pet117</name>
    <name type="ORF">SPBC1604.25</name>
</gene>
<accession>C6Y4C1</accession>